<accession>Q9Y4C5</accession>
<accession>D3DNG5</accession>
<accession>Q2M370</accession>
<accession>Q9GZN5</accession>
<accession>Q9UED5</accession>
<accession>Q9Y6F2</accession>
<organism>
    <name type="scientific">Homo sapiens</name>
    <name type="common">Human</name>
    <dbReference type="NCBI Taxonomy" id="9606"/>
    <lineage>
        <taxon>Eukaryota</taxon>
        <taxon>Metazoa</taxon>
        <taxon>Chordata</taxon>
        <taxon>Craniata</taxon>
        <taxon>Vertebrata</taxon>
        <taxon>Euteleostomi</taxon>
        <taxon>Mammalia</taxon>
        <taxon>Eutheria</taxon>
        <taxon>Euarchontoglires</taxon>
        <taxon>Primates</taxon>
        <taxon>Haplorrhini</taxon>
        <taxon>Catarrhini</taxon>
        <taxon>Hominidae</taxon>
        <taxon>Homo</taxon>
    </lineage>
</organism>
<comment type="function">
    <text evidence="5 7">Sulfotransferase that utilizes 3'-phospho-5'-adenylyl sulfate (PAPS) as sulfonate donor to catalyze the transfer of sulfate to position 6 of non-reducing N-acetylglucosamine (GlcNAc) residues within keratan-like structures on N-linked glycans and within mucin-associated glycans that can ultimately serve as SELL ligands. SELL ligands are present in high endothelial cells (HEVs) and play a central role in lymphocyte homing at sites of inflammation. Participates in biosynthesis of the SELL ligand sialyl 6-sulfo Lewis X and in lymphocyte homing to Peyer patches. Has no activity toward O-linked sugars. Its substrate specificity may be influenced by its subcellular location. Sulfates GlcNAc residues at terminal, non-reducing ends of oligosaccharide chains.</text>
</comment>
<comment type="catalytic activity">
    <reaction evidence="1">
        <text>3-O-{N-acetyl-beta-D-glucosaminyl-(1-&gt;3)-beta-D-galactosyl-(1-&gt;3)-N-acetyl-alpha-D-galactosaminyl}-L-threonyl-[protein] + 3'-phosphoadenylyl sulfate = 3-O-{6-O-sulfo-N-acetyl-beta-D-glucosaminyl-(1-&gt;3)-beta-D-galactosyl-(1-&gt;3)-N-acetyl-alpha-D-galactosaminyl}-L-threonyl-[protein] + adenosine 3',5'-bisphosphate + H(+)</text>
        <dbReference type="Rhea" id="RHEA:67856"/>
        <dbReference type="Rhea" id="RHEA-COMP:17368"/>
        <dbReference type="Rhea" id="RHEA-COMP:17369"/>
        <dbReference type="ChEBI" id="CHEBI:15378"/>
        <dbReference type="ChEBI" id="CHEBI:58339"/>
        <dbReference type="ChEBI" id="CHEBI:58343"/>
        <dbReference type="ChEBI" id="CHEBI:176489"/>
        <dbReference type="ChEBI" id="CHEBI:176492"/>
    </reaction>
    <physiologicalReaction direction="left-to-right" evidence="1">
        <dbReference type="Rhea" id="RHEA:67857"/>
    </physiologicalReaction>
</comment>
<comment type="catalytic activity">
    <reaction evidence="1">
        <text>3-O-{N-acetyl-beta-D-glucosaminyl-(1-&gt;3)-beta-D-galactosyl-(1-&gt;3)-N-acetyl-alpha-D-galactosaminyl}-L-seryl-[protein] + 3'-phosphoadenylyl sulfate = 3-O-{6-O-sulfo-N-acetyl-beta-D-glucosaminyl-(1-&gt;3)-beta-D-galactosyl-(1-&gt;3)-N-acetyl-alpha-D-galactosaminyl}-L-seryl-[protein] + adenosine 3',5'-bisphosphate + H(+)</text>
        <dbReference type="Rhea" id="RHEA:67860"/>
        <dbReference type="Rhea" id="RHEA-COMP:17365"/>
        <dbReference type="Rhea" id="RHEA-COMP:17366"/>
        <dbReference type="ChEBI" id="CHEBI:15378"/>
        <dbReference type="ChEBI" id="CHEBI:58339"/>
        <dbReference type="ChEBI" id="CHEBI:58343"/>
        <dbReference type="ChEBI" id="CHEBI:176490"/>
        <dbReference type="ChEBI" id="CHEBI:176491"/>
    </reaction>
    <physiologicalReaction direction="left-to-right" evidence="1">
        <dbReference type="Rhea" id="RHEA:67861"/>
    </physiologicalReaction>
</comment>
<comment type="catalytic activity">
    <reaction evidence="7">
        <text>a 3-O-{beta-D-galactosyl-(1-&gt;3)-[N-acetyl-beta-D-glucosaminyl-(1-&gt;6)]-N-acetyl-alpha-D-galactosaminyl}-L-threonyl-[protein] + 3'-phosphoadenylyl sulfate = 3-O-{beta-D-galactosyl-(1-&gt;3)-[6-O-sulfo-N-acetyl-beta-D-glucosaminyl-(1-&gt;6)]-N-acetyl-alpha-D-galactosaminyl}-L-threonyl-[protein] + adenosine 3',5'-bisphosphate + H(+)</text>
        <dbReference type="Rhea" id="RHEA:67864"/>
        <dbReference type="Rhea" id="RHEA-COMP:14420"/>
        <dbReference type="Rhea" id="RHEA-COMP:17370"/>
        <dbReference type="ChEBI" id="CHEBI:15378"/>
        <dbReference type="ChEBI" id="CHEBI:58339"/>
        <dbReference type="ChEBI" id="CHEBI:58343"/>
        <dbReference type="ChEBI" id="CHEBI:139607"/>
        <dbReference type="ChEBI" id="CHEBI:176493"/>
    </reaction>
    <physiologicalReaction direction="left-to-right" evidence="16">
        <dbReference type="Rhea" id="RHEA:67865"/>
    </physiologicalReaction>
</comment>
<comment type="catalytic activity">
    <reaction evidence="7">
        <text>3-O-{beta-D-galactosyl-(1-&gt;3)-[N-acetyl-beta-D-glucosaminyl-(1-&gt;6)]-N-acetyl-alpha-D-galactosaminyl}-L-seryl-[protein] + 3'-phosphoadenylyl sulfate = 3-O-{beta-D-galactosyl-(1-&gt;3)-[6-O-sulfo-N-acetyl-beta-D-glucosaminyl-(1-&gt;6)]-N-acetyl-alpha-D-galactosaminyl}-L-seryl-[protein] + adenosine 3',5'-bisphosphate + H(+)</text>
        <dbReference type="Rhea" id="RHEA:67868"/>
        <dbReference type="Rhea" id="RHEA-COMP:14419"/>
        <dbReference type="Rhea" id="RHEA-COMP:17367"/>
        <dbReference type="ChEBI" id="CHEBI:15378"/>
        <dbReference type="ChEBI" id="CHEBI:58339"/>
        <dbReference type="ChEBI" id="CHEBI:58343"/>
        <dbReference type="ChEBI" id="CHEBI:139605"/>
        <dbReference type="ChEBI" id="CHEBI:176494"/>
    </reaction>
    <physiologicalReaction direction="left-to-right" evidence="16">
        <dbReference type="Rhea" id="RHEA:67869"/>
    </physiologicalReaction>
</comment>
<comment type="biophysicochemical properties">
    <kinetics>
        <KM evidence="8">3.9 uM for PAPS</KM>
        <KM evidence="8">1.4 mM for BetaBnO-GlcNAc</KM>
    </kinetics>
</comment>
<comment type="pathway">
    <text evidence="7">Protein modification; carbohydrate sulfation.</text>
</comment>
<comment type="subunit">
    <text evidence="10 13">Homodimer; disulfide-linked. Homodimerization is not essential for enzyme activity.</text>
</comment>
<comment type="subcellular location">
    <subcellularLocation>
        <location evidence="9 13">Golgi apparatus</location>
        <location evidence="9 13">trans-Golgi network membrane</location>
        <topology evidence="9 13">Single-pass type II membrane protein</topology>
    </subcellularLocation>
</comment>
<comment type="alternative products">
    <event type="alternative initiation"/>
    <isoform>
        <id>Q9Y4C5-1</id>
        <name>1</name>
        <sequence type="displayed"/>
    </isoform>
    <isoform>
        <id>Q9Y4C5-2</id>
        <name>2</name>
        <sequence type="described" ref="VSP_018887"/>
    </isoform>
</comment>
<comment type="tissue specificity">
    <text evidence="4 6 14">Widely expressed. Highly expressed in bone marrow, peripheral blood leukocytes, spleen, brain, spinal cord, ovary and placenta. Expressed by high endothelial cells (HEVs) and leukocytes.</text>
</comment>
<comment type="induction">
    <text evidence="6">Up-regulated upon cytokine activation.</text>
</comment>
<comment type="PTM">
    <text evidence="12">Glycosylation at Asn-475 is required for catalytic activity.</text>
</comment>
<comment type="miscellaneous">
    <molecule>Isoform 2</molecule>
    <text evidence="15">Higher levels of expression compared to isoform 1 when expressed in HeLa cells. Exhibits similar intracellular GlcNAc-6-O-sulfation activity.</text>
</comment>
<comment type="similarity">
    <text evidence="15">Belongs to the sulfotransferase 1 family. Gal/GlcNAc/GalNAc subfamily.</text>
</comment>
<comment type="sequence caution" evidence="15">
    <conflict type="erroneous initiation">
        <sequence resource="EMBL-CDS" id="BAA34265"/>
    </conflict>
</comment>
<comment type="sequence caution" evidence="15">
    <conflict type="erroneous initiation">
        <sequence resource="EMBL-CDS" id="BAB16886"/>
    </conflict>
</comment>
<comment type="sequence caution" evidence="15">
    <conflict type="erroneous initiation">
        <sequence resource="EMBL-CDS" id="BAB16887"/>
    </conflict>
</comment>
<feature type="chain" id="PRO_0000085186" description="Carbohydrate sulfotransferase 2">
    <location>
        <begin position="1"/>
        <end position="530"/>
    </location>
</feature>
<feature type="topological domain" description="Cytoplasmic" evidence="2">
    <location>
        <begin position="1"/>
        <end position="54"/>
    </location>
</feature>
<feature type="transmembrane region" description="Helical; Signal-anchor for type II membrane protein" evidence="2">
    <location>
        <begin position="55"/>
        <end position="75"/>
    </location>
</feature>
<feature type="topological domain" description="Lumenal" evidence="2">
    <location>
        <begin position="76"/>
        <end position="530"/>
    </location>
</feature>
<feature type="region of interest" description="Disordered" evidence="3">
    <location>
        <begin position="89"/>
        <end position="119"/>
    </location>
</feature>
<feature type="binding site" evidence="15">
    <location>
        <begin position="173"/>
        <end position="179"/>
    </location>
    <ligand>
        <name>3'-phosphoadenylyl sulfate</name>
        <dbReference type="ChEBI" id="CHEBI:58339"/>
    </ligand>
</feature>
<feature type="binding site" evidence="15">
    <location>
        <begin position="332"/>
        <end position="340"/>
    </location>
    <ligand>
        <name>3'-phosphoadenylyl sulfate</name>
        <dbReference type="ChEBI" id="CHEBI:58339"/>
    </ligand>
</feature>
<feature type="site" description="Not glycosylated" evidence="12">
    <location>
        <position position="152"/>
    </location>
</feature>
<feature type="glycosylation site" description="N-linked (GlcNAc...) asparagine" evidence="12">
    <location>
        <position position="243"/>
    </location>
</feature>
<feature type="glycosylation site" description="N-linked (GlcNAc...) asparagine" evidence="12">
    <location>
        <position position="457"/>
    </location>
</feature>
<feature type="glycosylation site" description="N-linked (GlcNAc...) asparagine" evidence="12">
    <location>
        <position position="475"/>
    </location>
</feature>
<feature type="splice variant" id="VSP_018887" description="In isoform 2." evidence="15">
    <location>
        <begin position="1"/>
        <end position="47"/>
    </location>
</feature>
<feature type="mutagenesis site" description="Does not affect homodimerization. Abolishes homodimerization but not enzyme activity; when associated with S-39." evidence="10">
    <original>C</original>
    <variation>S</variation>
    <location>
        <position position="59"/>
    </location>
</feature>
<feature type="mutagenesis site" description="Induces migration in both homodimeric and monomeric forms. Abolishes homodimerization but not enzyme activity; when associated with S-12." evidence="10">
    <original>C</original>
    <variation>S</variation>
    <location>
        <position position="86"/>
    </location>
</feature>
<feature type="mutagenesis site" description="Induces a strong decrease in enzyme activity." evidence="8">
    <original>R</original>
    <variation>A</variation>
    <location>
        <position position="174"/>
    </location>
</feature>
<feature type="mutagenesis site" description="Induces a strong decrease in enzyme activity." evidence="8">
    <original>R</original>
    <variation>A</variation>
    <location>
        <position position="296"/>
    </location>
</feature>
<feature type="mutagenesis site" description="Loss of function." evidence="8">
    <original>K</original>
    <variation>A</variation>
    <location>
        <position position="304"/>
    </location>
</feature>
<feature type="mutagenesis site" description="Loss of function." evidence="8">
    <original>R</original>
    <variation>A</variation>
    <location>
        <position position="332"/>
    </location>
</feature>
<feature type="mutagenesis site" description="Induces a strong decrease in enzyme activity." evidence="8">
    <original>R</original>
    <variation>A</variation>
    <location>
        <position position="341"/>
    </location>
</feature>
<feature type="mutagenesis site" description="Reduced localization in the Golgi." evidence="12">
    <original>N</original>
    <variation>A</variation>
    <location>
        <position position="457"/>
    </location>
</feature>
<feature type="mutagenesis site" description="Unable to sulfate the sialyl Lewis X tetrasaccharide." evidence="12">
    <original>N</original>
    <variation>A</variation>
    <location>
        <position position="475"/>
    </location>
</feature>
<feature type="mutagenesis site" description="Has weak or no effect." evidence="11">
    <original>K</original>
    <variation>A</variation>
    <location>
        <position position="518"/>
    </location>
</feature>
<feature type="mutagenesis site" description="Has weak or no effect." evidence="11">
    <original>D</original>
    <variation>A</variation>
    <location>
        <position position="519"/>
    </location>
</feature>
<feature type="mutagenesis site" description="Has weak or no effect." evidence="11">
    <original>L</original>
    <variation>A</variation>
    <location>
        <position position="520"/>
    </location>
</feature>
<feature type="mutagenesis site" description="No effect." evidence="11">
    <original>S</original>
    <variation>A</variation>
    <location>
        <position position="521"/>
    </location>
</feature>
<feature type="mutagenesis site" description="No effect." evidence="11">
    <original>K</original>
    <variation>A</variation>
    <location>
        <position position="522"/>
    </location>
</feature>
<feature type="mutagenesis site" description="Has weak or no effect." evidence="11">
    <original>T</original>
    <variation>A</variation>
    <location>
        <position position="523"/>
    </location>
</feature>
<feature type="mutagenesis site" description="Induces a strong decrease in enzyme activity." evidence="11">
    <original>L</original>
    <variation>A</variation>
    <variation>T</variation>
    <location>
        <position position="524"/>
    </location>
</feature>
<feature type="mutagenesis site" description="Induces a strong decrease in enzyme activity." evidence="11">
    <original>L</original>
    <variation>A</variation>
    <location>
        <position position="525"/>
    </location>
</feature>
<feature type="mutagenesis site" description="Has weak or no effect." evidence="11">
    <original>L</original>
    <variation>T</variation>
    <location>
        <position position="525"/>
    </location>
</feature>
<feature type="mutagenesis site" description="Has weak or no effect." evidence="11">
    <original>R</original>
    <variation>A</variation>
    <location>
        <position position="526"/>
    </location>
</feature>
<feature type="mutagenesis site" description="No effect." evidence="11">
    <original>K</original>
    <variation>A</variation>
    <location>
        <position position="527"/>
    </location>
</feature>
<feature type="mutagenesis site" description="Has weak or no effect." evidence="11">
    <original>P</original>
    <variation>A</variation>
    <location>
        <position position="528"/>
    </location>
</feature>
<feature type="mutagenesis site" description="No effect." evidence="11">
    <original>R</original>
    <variation>A</variation>
    <location>
        <position position="529"/>
    </location>
</feature>
<feature type="mutagenesis site" description="Induces a strong decrease in enzyme activity." evidence="11">
    <original>L</original>
    <variation>A</variation>
    <variation>T</variation>
    <location>
        <position position="530"/>
    </location>
</feature>
<feature type="sequence conflict" description="In Ref. 4; BAB16887." evidence="15" ref="4">
    <original>A</original>
    <variation>V</variation>
    <location>
        <position position="8"/>
    </location>
</feature>
<reference key="1">
    <citation type="journal article" date="1998" name="J. Biochem.">
        <title>Human N-acetylglucosamine-6-O-sulfotransferase involved in the biosynthesis of 6-sulfo sialyl Lewis X: molecular cloning, chromosomal mapping, and expression in various organs and tumor cells.</title>
        <authorList>
            <person name="Uchimura K."/>
            <person name="Muramatsu H."/>
            <person name="Kaname T."/>
            <person name="Ogawa H."/>
            <person name="Yamakawa T."/>
            <person name="Fan Q.-W."/>
            <person name="Mitsuoka C."/>
            <person name="Kannagi R."/>
            <person name="Habuchi O."/>
            <person name="Yokoyama I."/>
            <person name="Yamamura K."/>
            <person name="Ozaki T."/>
            <person name="Nakagawara A."/>
            <person name="Kadomatsu K."/>
            <person name="Muramatsu T."/>
        </authorList>
    </citation>
    <scope>NUCLEOTIDE SEQUENCE [MRNA]</scope>
    <scope>CATALYTIC ACTIVITY</scope>
    <scope>ALTERNATIVE INITIATION</scope>
    <scope>TISSUE SPECIFICITY</scope>
    <source>
        <tissue>Brain</tissue>
    </source>
</reference>
<reference key="2">
    <citation type="submission" date="2002-12" db="EMBL/GenBank/DDBJ databases">
        <authorList>
            <person name="Uchimura K."/>
            <person name="Muramatsu H."/>
            <person name="Muramatsu T."/>
        </authorList>
    </citation>
    <scope>SEQUENCE REVISION</scope>
</reference>
<reference key="3">
    <citation type="journal article" date="1999" name="Genomics">
        <title>CHST1 and CHST2 sulfotransferases expressed by human vascular endothelial cells: cDNA cloning, expression, and chromosomal localization.</title>
        <authorList>
            <person name="Li X."/>
            <person name="Tedder T.F."/>
        </authorList>
    </citation>
    <scope>NUCLEOTIDE SEQUENCE [MRNA]</scope>
    <scope>TISSUE SPECIFICITY</scope>
    <source>
        <tissue>Umbilical vein endothelial cell</tissue>
    </source>
</reference>
<reference key="4">
    <citation type="journal article" date="2000" name="Biochim. Biophys. Acta">
        <title>Functional expression and genomic structure of human N-acetylglucosamine-6-O-sulfotransferase that transfers sulfate to b-N-acetylglucosamine at the nonreducing end of an N-acetyllactosamine sequence.</title>
        <authorList>
            <person name="Sakaguchi H."/>
            <person name="Kitagawa H."/>
            <person name="Sugahara K."/>
        </authorList>
    </citation>
    <scope>NUCLEOTIDE SEQUENCE [GENOMIC DNA / MRNA]</scope>
    <scope>FUNCTION</scope>
    <source>
        <tissue>Placenta</tissue>
    </source>
</reference>
<reference key="5">
    <citation type="submission" date="2005-09" db="EMBL/GenBank/DDBJ databases">
        <authorList>
            <person name="Mural R.J."/>
            <person name="Istrail S."/>
            <person name="Sutton G.G."/>
            <person name="Florea L."/>
            <person name="Halpern A.L."/>
            <person name="Mobarry C.M."/>
            <person name="Lippert R."/>
            <person name="Walenz B."/>
            <person name="Shatkay H."/>
            <person name="Dew I."/>
            <person name="Miller J.R."/>
            <person name="Flanigan M.J."/>
            <person name="Edwards N.J."/>
            <person name="Bolanos R."/>
            <person name="Fasulo D."/>
            <person name="Halldorsson B.V."/>
            <person name="Hannenhalli S."/>
            <person name="Turner R."/>
            <person name="Yooseph S."/>
            <person name="Lu F."/>
            <person name="Nusskern D.R."/>
            <person name="Shue B.C."/>
            <person name="Zheng X.H."/>
            <person name="Zhong F."/>
            <person name="Delcher A.L."/>
            <person name="Huson D.H."/>
            <person name="Kravitz S.A."/>
            <person name="Mouchard L."/>
            <person name="Reinert K."/>
            <person name="Remington K.A."/>
            <person name="Clark A.G."/>
            <person name="Waterman M.S."/>
            <person name="Eichler E.E."/>
            <person name="Adams M.D."/>
            <person name="Hunkapiller M.W."/>
            <person name="Myers E.W."/>
            <person name="Venter J.C."/>
        </authorList>
    </citation>
    <scope>NUCLEOTIDE SEQUENCE [LARGE SCALE GENOMIC DNA]</scope>
</reference>
<reference key="6">
    <citation type="journal article" date="2004" name="Genome Res.">
        <title>The status, quality, and expansion of the NIH full-length cDNA project: the Mammalian Gene Collection (MGC).</title>
        <authorList>
            <consortium name="The MGC Project Team"/>
        </authorList>
    </citation>
    <scope>NUCLEOTIDE SEQUENCE [LARGE SCALE MRNA]</scope>
    <source>
        <tissue>Brain</tissue>
    </source>
</reference>
<reference key="7">
    <citation type="journal article" date="2001" name="J. Leukoc. Biol.">
        <title>CHST1 and CHST2 sulfotransferase expression by vascular endothelial cells regulates shear-resistant leukocyte rolling via L-selectin.</title>
        <authorList>
            <person name="Li X."/>
            <person name="Tu L."/>
            <person name="Murphy P.G."/>
            <person name="Kadono T."/>
            <person name="Steeber D.A."/>
            <person name="Tedder T.F."/>
        </authorList>
    </citation>
    <scope>TISSUE SPECIFICITY</scope>
    <scope>INDUCTION</scope>
</reference>
<reference key="8">
    <citation type="journal article" date="2002" name="Biochemistry">
        <title>Characterization and mutagenesis of Gal/GlcNAc-6-O-sulfotransferases.</title>
        <authorList>
            <person name="Grunwell J.R."/>
            <person name="Rath V.L."/>
            <person name="Rasmussen J."/>
            <person name="Cabrilo Z."/>
            <person name="Bertozzi C.R."/>
        </authorList>
    </citation>
    <scope>BIOPHYSICOCHEMICAL PROPERTIES</scope>
    <scope>MUTAGENESIS OF ARG-174; ARG-296; LYS-304; ARG-332 AND ARG-341</scope>
</reference>
<reference key="9">
    <citation type="journal article" date="2002" name="J. Biol. Chem.">
        <title>Specificities of N-acetylglucosamine-6-O-sulfotransferases in relation to L-selectin ligand synthesis and tumor-associated enzyme expression.</title>
        <authorList>
            <person name="Uchimura K."/>
            <person name="El-Fasakhany F.M."/>
            <person name="Hori M."/>
            <person name="Hemmerich S."/>
            <person name="Blink S.E."/>
            <person name="Kansas G.S."/>
            <person name="Kanamori A."/>
            <person name="Kumamoto K."/>
            <person name="Kannagi R."/>
            <person name="Muramatsu T."/>
        </authorList>
    </citation>
    <scope>FUNCTION</scope>
    <scope>CATALYTIC ACTIVITY</scope>
    <scope>SUBSTRATE SPECIFICITY</scope>
    <scope>PATHWAY</scope>
</reference>
<reference key="10">
    <citation type="journal article" date="2003" name="J. Biol. Chem.">
        <title>Golgi localization of carbohydrate sulfotransferases is a determinant of L-selectin ligand biosynthesis.</title>
        <authorList>
            <person name="de Graffenried C.L."/>
            <person name="Bertozzi C.R."/>
        </authorList>
    </citation>
    <scope>SUBCELLULAR LOCATION</scope>
</reference>
<reference key="11">
    <citation type="journal article" date="2004" name="J. Biochem.">
        <title>Role of the carboxyl-terminal region in the activity of N-acetylglucosamine 6-o-sulfotransferase-1.</title>
        <authorList>
            <person name="Chen L."/>
            <person name="Ichihara-Tanaka K."/>
            <person name="Muramatsu T."/>
        </authorList>
    </citation>
    <scope>MUTAGENESIS OF LYS-518; ASP-519; LEU-520; SER-521; LYS-522; THR-523; LEU-524; LEU-525; ARG-526; LYS-527; PRO-528; ARG-529 AND LEU-530</scope>
</reference>
<reference key="12">
    <citation type="journal article" date="2004" name="J. Biol. Chem.">
        <title>The stem region of the sulfotransferase GlcNAc6ST-1 is a determinant of substrate specificity.</title>
        <authorList>
            <person name="de Graffenried C.L."/>
            <person name="Bertozzi C.R."/>
        </authorList>
    </citation>
    <scope>SUBUNIT</scope>
    <scope>MUTAGENESIS OF CYS-59 AND CYS-86</scope>
</reference>
<reference key="13">
    <citation type="journal article" date="2009" name="Glycobiology">
        <title>Effects of N-glycosylation on the activity and localization of GlcNAc-6-sulfotransferase 1.</title>
        <authorList>
            <person name="Desko M.M."/>
            <person name="Gross D.A."/>
            <person name="Kohler J.J."/>
        </authorList>
    </citation>
    <scope>GLYCOSYLATION AT ASN-243; ASN-457 AND ASN-475</scope>
    <scope>LACK OF GLYCOSYLATION AT ASN-152</scope>
    <scope>MUTAGENESIS OF ASN-457 AND ASN-475</scope>
</reference>
<reference key="14">
    <citation type="journal article" date="2012" name="J. Histochem. Cytochem.">
        <title>Expression of long-form N-acetylglucosamine-6-O-sulfotransferase 1 in human high endothelial venules.</title>
        <authorList>
            <person name="Fujiwara M."/>
            <person name="Kobayashi M."/>
            <person name="Hoshino H."/>
            <person name="Uchimura K."/>
            <person name="Nakada T."/>
            <person name="Masumoto J."/>
            <person name="Sakai Y."/>
            <person name="Fukuda M."/>
            <person name="Nakayama J."/>
        </authorList>
    </citation>
    <scope>SUBCELLULAR LOCATION</scope>
    <scope>SUBUNIT</scope>
    <scope>ALTERNATIVE INITIATION</scope>
</reference>
<name>CHST2_HUMAN</name>
<gene>
    <name type="primary">CHST2</name>
    <name type="synonym">GN6ST</name>
</gene>
<evidence type="ECO:0000250" key="1">
    <source>
        <dbReference type="UniProtKB" id="Q80WV3"/>
    </source>
</evidence>
<evidence type="ECO:0000255" key="2"/>
<evidence type="ECO:0000256" key="3">
    <source>
        <dbReference type="SAM" id="MobiDB-lite"/>
    </source>
</evidence>
<evidence type="ECO:0000269" key="4">
    <source>
    </source>
</evidence>
<evidence type="ECO:0000269" key="5">
    <source>
    </source>
</evidence>
<evidence type="ECO:0000269" key="6">
    <source>
    </source>
</evidence>
<evidence type="ECO:0000269" key="7">
    <source>
    </source>
</evidence>
<evidence type="ECO:0000269" key="8">
    <source>
    </source>
</evidence>
<evidence type="ECO:0000269" key="9">
    <source>
    </source>
</evidence>
<evidence type="ECO:0000269" key="10">
    <source>
    </source>
</evidence>
<evidence type="ECO:0000269" key="11">
    <source>
    </source>
</evidence>
<evidence type="ECO:0000269" key="12">
    <source>
    </source>
</evidence>
<evidence type="ECO:0000269" key="13">
    <source>
    </source>
</evidence>
<evidence type="ECO:0000269" key="14">
    <source>
    </source>
</evidence>
<evidence type="ECO:0000305" key="15"/>
<evidence type="ECO:0000305" key="16">
    <source>
    </source>
</evidence>
<proteinExistence type="evidence at protein level"/>
<dbReference type="EC" id="2.8.2.-" evidence="7"/>
<dbReference type="EMBL" id="AB014679">
    <property type="protein sequence ID" value="BAA34265.2"/>
    <property type="status" value="ALT_INIT"/>
    <property type="molecule type" value="mRNA"/>
</dbReference>
<dbReference type="EMBL" id="AB014680">
    <property type="protein sequence ID" value="BAA34266.2"/>
    <property type="molecule type" value="mRNA"/>
</dbReference>
<dbReference type="EMBL" id="AF083066">
    <property type="protein sequence ID" value="AAD20981.1"/>
    <property type="molecule type" value="mRNA"/>
</dbReference>
<dbReference type="EMBL" id="AB021124">
    <property type="protein sequence ID" value="BAB16886.1"/>
    <property type="status" value="ALT_INIT"/>
    <property type="molecule type" value="mRNA"/>
</dbReference>
<dbReference type="EMBL" id="AB021125">
    <property type="protein sequence ID" value="BAB16887.1"/>
    <property type="status" value="ALT_INIT"/>
    <property type="molecule type" value="Genomic_DNA"/>
</dbReference>
<dbReference type="EMBL" id="CH471052">
    <property type="protein sequence ID" value="EAW78952.1"/>
    <property type="molecule type" value="Genomic_DNA"/>
</dbReference>
<dbReference type="EMBL" id="CH471052">
    <property type="protein sequence ID" value="EAW78953.1"/>
    <property type="molecule type" value="Genomic_DNA"/>
</dbReference>
<dbReference type="EMBL" id="BC105010">
    <property type="protein sequence ID" value="AAI05011.1"/>
    <property type="molecule type" value="mRNA"/>
</dbReference>
<dbReference type="EMBL" id="BC105012">
    <property type="protein sequence ID" value="AAI05013.1"/>
    <property type="molecule type" value="mRNA"/>
</dbReference>
<dbReference type="CCDS" id="CCDS3129.1">
    <molecule id="Q9Y4C5-1"/>
</dbReference>
<dbReference type="RefSeq" id="NP_004258.2">
    <molecule id="Q9Y4C5-1"/>
    <property type="nucleotide sequence ID" value="NM_004267.4"/>
</dbReference>
<dbReference type="BioGRID" id="114826">
    <property type="interactions" value="13"/>
</dbReference>
<dbReference type="FunCoup" id="Q9Y4C5">
    <property type="interactions" value="1627"/>
</dbReference>
<dbReference type="IntAct" id="Q9Y4C5">
    <property type="interactions" value="2"/>
</dbReference>
<dbReference type="STRING" id="9606.ENSP00000307911"/>
<dbReference type="GlyCosmos" id="Q9Y4C5">
    <property type="glycosylation" value="3 sites, No reported glycans"/>
</dbReference>
<dbReference type="GlyGen" id="Q9Y4C5">
    <property type="glycosylation" value="4 sites, 1 N-linked glycan (2 sites)"/>
</dbReference>
<dbReference type="iPTMnet" id="Q9Y4C5"/>
<dbReference type="PhosphoSitePlus" id="Q9Y4C5"/>
<dbReference type="BioMuta" id="CHST2"/>
<dbReference type="DMDM" id="61212252"/>
<dbReference type="MassIVE" id="Q9Y4C5"/>
<dbReference type="PaxDb" id="9606-ENSP00000307911"/>
<dbReference type="PeptideAtlas" id="Q9Y4C5"/>
<dbReference type="ProteomicsDB" id="86161">
    <molecule id="Q9Y4C5-1"/>
</dbReference>
<dbReference type="ProteomicsDB" id="86162">
    <molecule id="Q9Y4C5-2"/>
</dbReference>
<dbReference type="Pumba" id="Q9Y4C5"/>
<dbReference type="Antibodypedia" id="2653">
    <property type="antibodies" value="221 antibodies from 27 providers"/>
</dbReference>
<dbReference type="DNASU" id="9435"/>
<dbReference type="Ensembl" id="ENST00000309575.5">
    <molecule id="Q9Y4C5-1"/>
    <property type="protein sequence ID" value="ENSP00000307911.3"/>
    <property type="gene ID" value="ENSG00000175040.6"/>
</dbReference>
<dbReference type="GeneID" id="9435"/>
<dbReference type="KEGG" id="hsa:9435"/>
<dbReference type="MANE-Select" id="ENST00000309575.5">
    <property type="protein sequence ID" value="ENSP00000307911.3"/>
    <property type="RefSeq nucleotide sequence ID" value="NM_004267.5"/>
    <property type="RefSeq protein sequence ID" value="NP_004258.2"/>
</dbReference>
<dbReference type="AGR" id="HGNC:1970"/>
<dbReference type="CTD" id="9435"/>
<dbReference type="DisGeNET" id="9435"/>
<dbReference type="GeneCards" id="CHST2"/>
<dbReference type="HGNC" id="HGNC:1970">
    <property type="gene designation" value="CHST2"/>
</dbReference>
<dbReference type="HPA" id="ENSG00000175040">
    <property type="expression patterns" value="Tissue enhanced (brain)"/>
</dbReference>
<dbReference type="MIM" id="603798">
    <property type="type" value="gene"/>
</dbReference>
<dbReference type="neXtProt" id="NX_Q9Y4C5"/>
<dbReference type="OpenTargets" id="ENSG00000175040"/>
<dbReference type="PharmGKB" id="PA26502"/>
<dbReference type="VEuPathDB" id="HostDB:ENSG00000175040"/>
<dbReference type="eggNOG" id="ENOG502QTSD">
    <property type="taxonomic scope" value="Eukaryota"/>
</dbReference>
<dbReference type="GeneTree" id="ENSGT00940000161292"/>
<dbReference type="HOGENOM" id="CLU_028381_1_0_1"/>
<dbReference type="InParanoid" id="Q9Y4C5"/>
<dbReference type="OMA" id="DYKWHKG"/>
<dbReference type="OrthoDB" id="6138663at2759"/>
<dbReference type="PAN-GO" id="Q9Y4C5">
    <property type="GO annotations" value="4 GO annotations based on evolutionary models"/>
</dbReference>
<dbReference type="PhylomeDB" id="Q9Y4C5"/>
<dbReference type="TreeFam" id="TF342871"/>
<dbReference type="BioCyc" id="MetaCyc:ENSG00000175040-MONOMER"/>
<dbReference type="PathwayCommons" id="Q9Y4C5"/>
<dbReference type="Reactome" id="R-HSA-2022854">
    <property type="pathway name" value="Keratan sulfate biosynthesis"/>
</dbReference>
<dbReference type="SABIO-RK" id="Q9Y4C5"/>
<dbReference type="UniPathway" id="UPA00353"/>
<dbReference type="BioGRID-ORCS" id="9435">
    <property type="hits" value="9 hits in 1155 CRISPR screens"/>
</dbReference>
<dbReference type="ChiTaRS" id="CHST2">
    <property type="organism name" value="human"/>
</dbReference>
<dbReference type="GeneWiki" id="CHST2"/>
<dbReference type="GenomeRNAi" id="9435"/>
<dbReference type="Pharos" id="Q9Y4C5">
    <property type="development level" value="Tbio"/>
</dbReference>
<dbReference type="PRO" id="PR:Q9Y4C5"/>
<dbReference type="Proteomes" id="UP000005640">
    <property type="component" value="Chromosome 3"/>
</dbReference>
<dbReference type="RNAct" id="Q9Y4C5">
    <property type="molecule type" value="protein"/>
</dbReference>
<dbReference type="Bgee" id="ENSG00000175040">
    <property type="expression patterns" value="Expressed in decidua and 183 other cell types or tissues"/>
</dbReference>
<dbReference type="ExpressionAtlas" id="Q9Y4C5">
    <property type="expression patterns" value="baseline and differential"/>
</dbReference>
<dbReference type="GO" id="GO:0005829">
    <property type="term" value="C:cytosol"/>
    <property type="evidence" value="ECO:0000314"/>
    <property type="project" value="HPA"/>
</dbReference>
<dbReference type="GO" id="GO:0005794">
    <property type="term" value="C:Golgi apparatus"/>
    <property type="evidence" value="ECO:0000314"/>
    <property type="project" value="HPA"/>
</dbReference>
<dbReference type="GO" id="GO:0000139">
    <property type="term" value="C:Golgi membrane"/>
    <property type="evidence" value="ECO:0000304"/>
    <property type="project" value="Reactome"/>
</dbReference>
<dbReference type="GO" id="GO:0005654">
    <property type="term" value="C:nucleoplasm"/>
    <property type="evidence" value="ECO:0000314"/>
    <property type="project" value="HPA"/>
</dbReference>
<dbReference type="GO" id="GO:0005802">
    <property type="term" value="C:trans-Golgi network"/>
    <property type="evidence" value="ECO:0000314"/>
    <property type="project" value="UniProtKB"/>
</dbReference>
<dbReference type="GO" id="GO:0001517">
    <property type="term" value="F:N-acetylglucosamine 6-O-sulfotransferase activity"/>
    <property type="evidence" value="ECO:0000314"/>
    <property type="project" value="UniProtKB"/>
</dbReference>
<dbReference type="GO" id="GO:0008146">
    <property type="term" value="F:sulfotransferase activity"/>
    <property type="evidence" value="ECO:0000304"/>
    <property type="project" value="ProtInc"/>
</dbReference>
<dbReference type="GO" id="GO:0005975">
    <property type="term" value="P:carbohydrate metabolic process"/>
    <property type="evidence" value="ECO:0007669"/>
    <property type="project" value="InterPro"/>
</dbReference>
<dbReference type="GO" id="GO:0006954">
    <property type="term" value="P:inflammatory response"/>
    <property type="evidence" value="ECO:0000304"/>
    <property type="project" value="ProtInc"/>
</dbReference>
<dbReference type="GO" id="GO:0018146">
    <property type="term" value="P:keratan sulfate proteoglycan biosynthetic process"/>
    <property type="evidence" value="ECO:0000304"/>
    <property type="project" value="Reactome"/>
</dbReference>
<dbReference type="GO" id="GO:0006044">
    <property type="term" value="P:N-acetylglucosamine metabolic process"/>
    <property type="evidence" value="ECO:0000314"/>
    <property type="project" value="UniProtKB"/>
</dbReference>
<dbReference type="GO" id="GO:1903238">
    <property type="term" value="P:positive regulation of leukocyte tethering or rolling"/>
    <property type="evidence" value="ECO:0000250"/>
    <property type="project" value="UniProtKB"/>
</dbReference>
<dbReference type="GO" id="GO:0006790">
    <property type="term" value="P:sulfur compound metabolic process"/>
    <property type="evidence" value="ECO:0000314"/>
    <property type="project" value="UniProtKB"/>
</dbReference>
<dbReference type="FunFam" id="3.40.50.300:FF:000765">
    <property type="entry name" value="Sulfotransferase"/>
    <property type="match status" value="1"/>
</dbReference>
<dbReference type="Gene3D" id="3.40.50.300">
    <property type="entry name" value="P-loop containing nucleotide triphosphate hydrolases"/>
    <property type="match status" value="1"/>
</dbReference>
<dbReference type="InterPro" id="IPR016469">
    <property type="entry name" value="Carbohydrate_sulfotransferase"/>
</dbReference>
<dbReference type="InterPro" id="IPR051135">
    <property type="entry name" value="Gal/GlcNAc/GalNAc_ST"/>
</dbReference>
<dbReference type="InterPro" id="IPR027417">
    <property type="entry name" value="P-loop_NTPase"/>
</dbReference>
<dbReference type="InterPro" id="IPR000863">
    <property type="entry name" value="Sulfotransferase_dom"/>
</dbReference>
<dbReference type="PANTHER" id="PTHR10704">
    <property type="entry name" value="CARBOHYDRATE SULFOTRANSFERASE"/>
    <property type="match status" value="1"/>
</dbReference>
<dbReference type="PANTHER" id="PTHR10704:SF3">
    <property type="entry name" value="CARBOHYDRATE SULFOTRANSFERASE 2"/>
    <property type="match status" value="1"/>
</dbReference>
<dbReference type="Pfam" id="PF00685">
    <property type="entry name" value="Sulfotransfer_1"/>
    <property type="match status" value="1"/>
</dbReference>
<dbReference type="PIRSF" id="PIRSF005883">
    <property type="entry name" value="Carbohydrate_sulfotransferase"/>
    <property type="match status" value="1"/>
</dbReference>
<dbReference type="SUPFAM" id="SSF52540">
    <property type="entry name" value="P-loop containing nucleoside triphosphate hydrolases"/>
    <property type="match status" value="1"/>
</dbReference>
<sequence>MSRSPQRALPPGALPRLLQAAPAAAPRALLPQWPRRPGRRWPASPLGMKVFRRKALVLCAGYALLLVLTMLNLLDYKWHKEPLQQCNPDGPLGAAAGAAGGSWGRPGPPPAGPPRAHARLDLRTPYRPPAAAVGAAPAAAAGMAGVAAPPGNGTRGTGGVGDKRQLVYVFTTWRSGSSFFGELFNQNPEVFFLYEPVWHVWQKLYPGDAVSLQGAARDMLSALYRCDLSVFQLYSPAGSGGRNLTTLGIFGAATNKVVCSSPLCPAYRKEVVGLVDDRVCKKCPPQRLARFEEECRKYRTLVIKGVRVFDVAVLAPLLRDPALDLKVIHLVRDPRAVASSRIRSRHGLIRESLQVVRSRDPRAHRMPFLEAAGHKLGAKKEGVGGPADYHALGAMEVICNSMAKTLQTALQPPDWLQGHYLVVRYEDLVGDPVKTLRRVYDFVGLLVSPEMEQFALNMTSGSGSSSKPFVVSARNATQAANAWRTALTFQQIKQVEEFCYQPMAVLGYERVNSPEEVKDLSKTLLRKPRL</sequence>
<protein>
    <recommendedName>
        <fullName>Carbohydrate sulfotransferase 2</fullName>
        <ecNumber evidence="7">2.8.2.-</ecNumber>
    </recommendedName>
    <alternativeName>
        <fullName>Galactose/N-acetylglucosamine/N-acetylglucosamine 6-O-sulfotransferase 2</fullName>
        <shortName>GST-2</shortName>
    </alternativeName>
    <alternativeName>
        <fullName>N-acetylglucosamine 6-O-sulfotransferase 1</fullName>
        <shortName>GlcNAc6ST-1</shortName>
        <shortName>Gn6ST-1</shortName>
    </alternativeName>
</protein>
<keyword id="KW-0024">Alternative initiation</keyword>
<keyword id="KW-0119">Carbohydrate metabolism</keyword>
<keyword id="KW-1015">Disulfide bond</keyword>
<keyword id="KW-0325">Glycoprotein</keyword>
<keyword id="KW-0333">Golgi apparatus</keyword>
<keyword id="KW-0395">Inflammatory response</keyword>
<keyword id="KW-0472">Membrane</keyword>
<keyword id="KW-1267">Proteomics identification</keyword>
<keyword id="KW-1185">Reference proteome</keyword>
<keyword id="KW-0735">Signal-anchor</keyword>
<keyword id="KW-0808">Transferase</keyword>
<keyword id="KW-0812">Transmembrane</keyword>
<keyword id="KW-1133">Transmembrane helix</keyword>